<keyword id="KW-0963">Cytoplasm</keyword>
<keyword id="KW-0444">Lipid biosynthesis</keyword>
<keyword id="KW-0443">Lipid metabolism</keyword>
<keyword id="KW-0594">Phospholipid biosynthesis</keyword>
<keyword id="KW-1208">Phospholipid metabolism</keyword>
<keyword id="KW-0808">Transferase</keyword>
<name>PLSX_BACAH</name>
<protein>
    <recommendedName>
        <fullName evidence="1">Phosphate acyltransferase</fullName>
        <ecNumber evidence="1">2.3.1.274</ecNumber>
    </recommendedName>
    <alternativeName>
        <fullName evidence="1">Acyl-ACP phosphotransacylase</fullName>
    </alternativeName>
    <alternativeName>
        <fullName evidence="1">Acyl-[acyl-carrier-protein]--phosphate acyltransferase</fullName>
    </alternativeName>
    <alternativeName>
        <fullName evidence="1">Phosphate-acyl-ACP acyltransferase</fullName>
    </alternativeName>
</protein>
<dbReference type="EC" id="2.3.1.274" evidence="1"/>
<dbReference type="EMBL" id="CP000485">
    <property type="protein sequence ID" value="ABK86719.1"/>
    <property type="molecule type" value="Genomic_DNA"/>
</dbReference>
<dbReference type="RefSeq" id="WP_000684108.1">
    <property type="nucleotide sequence ID" value="NC_008600.1"/>
</dbReference>
<dbReference type="SMR" id="A0RHM6"/>
<dbReference type="GeneID" id="92799877"/>
<dbReference type="KEGG" id="btl:BALH_3484"/>
<dbReference type="HOGENOM" id="CLU_039379_1_1_9"/>
<dbReference type="UniPathway" id="UPA00085"/>
<dbReference type="GO" id="GO:0005737">
    <property type="term" value="C:cytoplasm"/>
    <property type="evidence" value="ECO:0007669"/>
    <property type="project" value="UniProtKB-SubCell"/>
</dbReference>
<dbReference type="GO" id="GO:0043811">
    <property type="term" value="F:phosphate:acyl-[acyl carrier protein] acyltransferase activity"/>
    <property type="evidence" value="ECO:0007669"/>
    <property type="project" value="UniProtKB-UniRule"/>
</dbReference>
<dbReference type="GO" id="GO:0006633">
    <property type="term" value="P:fatty acid biosynthetic process"/>
    <property type="evidence" value="ECO:0007669"/>
    <property type="project" value="UniProtKB-UniRule"/>
</dbReference>
<dbReference type="GO" id="GO:0008654">
    <property type="term" value="P:phospholipid biosynthetic process"/>
    <property type="evidence" value="ECO:0007669"/>
    <property type="project" value="UniProtKB-KW"/>
</dbReference>
<dbReference type="Gene3D" id="3.40.718.10">
    <property type="entry name" value="Isopropylmalate Dehydrogenase"/>
    <property type="match status" value="1"/>
</dbReference>
<dbReference type="HAMAP" id="MF_00019">
    <property type="entry name" value="PlsX"/>
    <property type="match status" value="1"/>
</dbReference>
<dbReference type="InterPro" id="IPR003664">
    <property type="entry name" value="FA_synthesis"/>
</dbReference>
<dbReference type="InterPro" id="IPR012281">
    <property type="entry name" value="Phospholipid_synth_PlsX-like"/>
</dbReference>
<dbReference type="NCBIfam" id="TIGR00182">
    <property type="entry name" value="plsX"/>
    <property type="match status" value="1"/>
</dbReference>
<dbReference type="PANTHER" id="PTHR30100">
    <property type="entry name" value="FATTY ACID/PHOSPHOLIPID SYNTHESIS PROTEIN PLSX"/>
    <property type="match status" value="1"/>
</dbReference>
<dbReference type="PANTHER" id="PTHR30100:SF1">
    <property type="entry name" value="PHOSPHATE ACYLTRANSFERASE"/>
    <property type="match status" value="1"/>
</dbReference>
<dbReference type="Pfam" id="PF02504">
    <property type="entry name" value="FA_synthesis"/>
    <property type="match status" value="1"/>
</dbReference>
<dbReference type="PIRSF" id="PIRSF002465">
    <property type="entry name" value="Phsphlp_syn_PlsX"/>
    <property type="match status" value="1"/>
</dbReference>
<dbReference type="SUPFAM" id="SSF53659">
    <property type="entry name" value="Isocitrate/Isopropylmalate dehydrogenase-like"/>
    <property type="match status" value="1"/>
</dbReference>
<accession>A0RHM6</accession>
<evidence type="ECO:0000255" key="1">
    <source>
        <dbReference type="HAMAP-Rule" id="MF_00019"/>
    </source>
</evidence>
<gene>
    <name evidence="1" type="primary">plsX</name>
    <name type="ordered locus">BALH_3484</name>
</gene>
<proteinExistence type="inferred from homology"/>
<reference key="1">
    <citation type="journal article" date="2007" name="J. Bacteriol.">
        <title>The complete genome sequence of Bacillus thuringiensis Al Hakam.</title>
        <authorList>
            <person name="Challacombe J.F."/>
            <person name="Altherr M.R."/>
            <person name="Xie G."/>
            <person name="Bhotika S.S."/>
            <person name="Brown N."/>
            <person name="Bruce D."/>
            <person name="Campbell C.S."/>
            <person name="Campbell M.L."/>
            <person name="Chen J."/>
            <person name="Chertkov O."/>
            <person name="Cleland C."/>
            <person name="Dimitrijevic M."/>
            <person name="Doggett N.A."/>
            <person name="Fawcett J.J."/>
            <person name="Glavina T."/>
            <person name="Goodwin L.A."/>
            <person name="Green L.D."/>
            <person name="Han C.S."/>
            <person name="Hill K.K."/>
            <person name="Hitchcock P."/>
            <person name="Jackson P.J."/>
            <person name="Keim P."/>
            <person name="Kewalramani A.R."/>
            <person name="Longmire J."/>
            <person name="Lucas S."/>
            <person name="Malfatti S."/>
            <person name="Martinez D."/>
            <person name="McMurry K."/>
            <person name="Meincke L.J."/>
            <person name="Misra M."/>
            <person name="Moseman B.L."/>
            <person name="Mundt M."/>
            <person name="Munk A.C."/>
            <person name="Okinaka R.T."/>
            <person name="Parson-Quintana B."/>
            <person name="Reilly L.P."/>
            <person name="Richardson P."/>
            <person name="Robinson D.L."/>
            <person name="Saunders E."/>
            <person name="Tapia R."/>
            <person name="Tesmer J.G."/>
            <person name="Thayer N."/>
            <person name="Thompson L.S."/>
            <person name="Tice H."/>
            <person name="Ticknor L.O."/>
            <person name="Wills P.L."/>
            <person name="Gilna P."/>
            <person name="Brettin T.S."/>
        </authorList>
    </citation>
    <scope>NUCLEOTIDE SEQUENCE [LARGE SCALE GENOMIC DNA]</scope>
    <source>
        <strain>Al Hakam</strain>
    </source>
</reference>
<comment type="function">
    <text evidence="1">Catalyzes the reversible formation of acyl-phosphate (acyl-PO(4)) from acyl-[acyl-carrier-protein] (acyl-ACP). This enzyme utilizes acyl-ACP as fatty acyl donor, but not acyl-CoA.</text>
</comment>
<comment type="catalytic activity">
    <reaction evidence="1">
        <text>a fatty acyl-[ACP] + phosphate = an acyl phosphate + holo-[ACP]</text>
        <dbReference type="Rhea" id="RHEA:42292"/>
        <dbReference type="Rhea" id="RHEA-COMP:9685"/>
        <dbReference type="Rhea" id="RHEA-COMP:14125"/>
        <dbReference type="ChEBI" id="CHEBI:43474"/>
        <dbReference type="ChEBI" id="CHEBI:59918"/>
        <dbReference type="ChEBI" id="CHEBI:64479"/>
        <dbReference type="ChEBI" id="CHEBI:138651"/>
        <dbReference type="EC" id="2.3.1.274"/>
    </reaction>
</comment>
<comment type="pathway">
    <text evidence="1">Lipid metabolism; phospholipid metabolism.</text>
</comment>
<comment type="subunit">
    <text evidence="1">Homodimer. Probably interacts with PlsY.</text>
</comment>
<comment type="subcellular location">
    <subcellularLocation>
        <location evidence="1">Cytoplasm</location>
    </subcellularLocation>
    <text evidence="1">Associated with the membrane possibly through PlsY.</text>
</comment>
<comment type="similarity">
    <text evidence="1">Belongs to the PlsX family.</text>
</comment>
<sequence>MKIAIDAMGGDHAPKAVVLGAMKAIKEYSDLHITLVGKEEEIRQYLTSEERITILHTDEKIESTDEPVRAVRRKKQASMVLAAQQVKDGVADACISAGSTGALMAAGLFVVGRMEGIERPALSPTMPTVDGEGFVMLDVGANVDAKPIHLYQYAVMGSVYAEKVRGIKNPRVGLLNVGTEDGKGNELSKQVFAMLKDAPINFVGNVESRDLLQGVADVVVCDGFTGNVALKSLEGTALALFSMLKEQLMSSFTSKLAAAVLKPKLMVLKDKMDYSEYGGAALFGLKAPVIKAHGSSNDQSIFSAIRQTREMVAKEVIPTISSVMEKEPLQ</sequence>
<feature type="chain" id="PRO_1000001719" description="Phosphate acyltransferase">
    <location>
        <begin position="1"/>
        <end position="330"/>
    </location>
</feature>
<organism>
    <name type="scientific">Bacillus thuringiensis (strain Al Hakam)</name>
    <dbReference type="NCBI Taxonomy" id="412694"/>
    <lineage>
        <taxon>Bacteria</taxon>
        <taxon>Bacillati</taxon>
        <taxon>Bacillota</taxon>
        <taxon>Bacilli</taxon>
        <taxon>Bacillales</taxon>
        <taxon>Bacillaceae</taxon>
        <taxon>Bacillus</taxon>
        <taxon>Bacillus cereus group</taxon>
    </lineage>
</organism>